<geneLocation type="mitochondrion"/>
<accession>Q35675</accession>
<comment type="function">
    <text evidence="2">Component of the ubiquinol-cytochrome c reductase complex (complex III or cytochrome b-c1 complex) that is part of the mitochondrial respiratory chain. The b-c1 complex mediates electron transfer from ubiquinol to cytochrome c. Contributes to the generation of a proton gradient across the mitochondrial membrane that is then used for ATP synthesis.</text>
</comment>
<comment type="cofactor">
    <cofactor evidence="2">
        <name>heme b</name>
        <dbReference type="ChEBI" id="CHEBI:60344"/>
    </cofactor>
    <text evidence="2">Binds 2 heme b groups non-covalently.</text>
</comment>
<comment type="subunit">
    <text evidence="2">The cytochrome bc1 complex contains 11 subunits: 3 respiratory subunits (MT-CYB, CYC1 and UQCRFS1), 2 core proteins (UQCRC1 and UQCRC2) and 6 low-molecular weight proteins (UQCRH/QCR6, UQCRB/QCR7, UQCRQ/QCR8, UQCR10/QCR9, UQCR11/QCR10 and a cleavage product of UQCRFS1). This cytochrome bc1 complex then forms a dimer.</text>
</comment>
<comment type="subcellular location">
    <subcellularLocation>
        <location evidence="2">Mitochondrion inner membrane</location>
        <topology evidence="2">Multi-pass membrane protein</topology>
    </subcellularLocation>
</comment>
<comment type="miscellaneous">
    <text evidence="1">Heme 1 (or BL or b562) is low-potential and absorbs at about 562 nm, and heme 2 (or BH or b566) is high-potential and absorbs at about 566 nm.</text>
</comment>
<comment type="similarity">
    <text evidence="3 4">Belongs to the cytochrome b family.</text>
</comment>
<comment type="caution">
    <text evidence="2">The full-length protein contains only eight transmembrane helices, not nine as predicted by bioinformatics tools.</text>
</comment>
<keyword id="KW-0249">Electron transport</keyword>
<keyword id="KW-0349">Heme</keyword>
<keyword id="KW-0408">Iron</keyword>
<keyword id="KW-0472">Membrane</keyword>
<keyword id="KW-0479">Metal-binding</keyword>
<keyword id="KW-0496">Mitochondrion</keyword>
<keyword id="KW-0999">Mitochondrion inner membrane</keyword>
<keyword id="KW-0679">Respiratory chain</keyword>
<keyword id="KW-0812">Transmembrane</keyword>
<keyword id="KW-1133">Transmembrane helix</keyword>
<keyword id="KW-0813">Transport</keyword>
<keyword id="KW-0830">Ubiquinone</keyword>
<protein>
    <recommendedName>
        <fullName>Cytochrome b</fullName>
    </recommendedName>
    <alternativeName>
        <fullName>Complex III subunit 3</fullName>
    </alternativeName>
    <alternativeName>
        <fullName>Complex III subunit III</fullName>
    </alternativeName>
    <alternativeName>
        <fullName>Cytochrome b-c1 complex subunit 3</fullName>
    </alternativeName>
    <alternativeName>
        <fullName>Ubiquinol-cytochrome-c reductase complex cytochrome b subunit</fullName>
    </alternativeName>
</protein>
<gene>
    <name type="primary">MT-CYB</name>
    <name type="synonym">COB</name>
    <name type="synonym">CYTB</name>
    <name type="synonym">MTCYB</name>
</gene>
<sequence length="381" mass="42802">MTNLRKTHPLMKIVNHSFIDLPAPSNISAWWNFGSLLGICLVIQILTGLFLAMHYTSDTLTAFSSVAHICRDVNYGWLIRNLHANGASMFFMCLFLHVGRGIYYGSYLYKETWNIGVILLLTVMATAFVGYVLPWGQMSFWGATVITNLLSAIPYVGTTLAEWIWGGFAVDKATLTRFFAFHFILPFIITALVIVHLLFLHETGSNNPSGINPDSDKIPFHPYYTIKDALGLMFLLLTLLLLALFSPDSLGDPDNFSPANPLNTPPHIKPEWYFLFAYAILRSIPNKLGGVLALLASILILLVIPFLHTANQRSMMFRPISQTLFWILSANLITLTWIGGQPVEQPFIIIGQLASILYFLLILVLMPLAGLFENYMLKPKW</sequence>
<dbReference type="EMBL" id="U07591">
    <property type="protein sequence ID" value="AAB88767.1"/>
    <property type="molecule type" value="Genomic_DNA"/>
</dbReference>
<dbReference type="SMR" id="Q35675"/>
<dbReference type="GO" id="GO:0005743">
    <property type="term" value="C:mitochondrial inner membrane"/>
    <property type="evidence" value="ECO:0007669"/>
    <property type="project" value="UniProtKB-SubCell"/>
</dbReference>
<dbReference type="GO" id="GO:0045275">
    <property type="term" value="C:respiratory chain complex III"/>
    <property type="evidence" value="ECO:0007669"/>
    <property type="project" value="InterPro"/>
</dbReference>
<dbReference type="GO" id="GO:0046872">
    <property type="term" value="F:metal ion binding"/>
    <property type="evidence" value="ECO:0007669"/>
    <property type="project" value="UniProtKB-KW"/>
</dbReference>
<dbReference type="GO" id="GO:0008121">
    <property type="term" value="F:ubiquinol-cytochrome-c reductase activity"/>
    <property type="evidence" value="ECO:0007669"/>
    <property type="project" value="InterPro"/>
</dbReference>
<dbReference type="GO" id="GO:0006122">
    <property type="term" value="P:mitochondrial electron transport, ubiquinol to cytochrome c"/>
    <property type="evidence" value="ECO:0007669"/>
    <property type="project" value="TreeGrafter"/>
</dbReference>
<dbReference type="CDD" id="cd00290">
    <property type="entry name" value="cytochrome_b_C"/>
    <property type="match status" value="1"/>
</dbReference>
<dbReference type="CDD" id="cd00284">
    <property type="entry name" value="Cytochrome_b_N"/>
    <property type="match status" value="1"/>
</dbReference>
<dbReference type="FunFam" id="1.20.810.10:FF:000002">
    <property type="entry name" value="Cytochrome b"/>
    <property type="match status" value="1"/>
</dbReference>
<dbReference type="Gene3D" id="1.20.810.10">
    <property type="entry name" value="Cytochrome Bc1 Complex, Chain C"/>
    <property type="match status" value="1"/>
</dbReference>
<dbReference type="InterPro" id="IPR005798">
    <property type="entry name" value="Cyt_b/b6_C"/>
</dbReference>
<dbReference type="InterPro" id="IPR036150">
    <property type="entry name" value="Cyt_b/b6_C_sf"/>
</dbReference>
<dbReference type="InterPro" id="IPR005797">
    <property type="entry name" value="Cyt_b/b6_N"/>
</dbReference>
<dbReference type="InterPro" id="IPR027387">
    <property type="entry name" value="Cytb/b6-like_sf"/>
</dbReference>
<dbReference type="InterPro" id="IPR030689">
    <property type="entry name" value="Cytochrome_b"/>
</dbReference>
<dbReference type="InterPro" id="IPR048260">
    <property type="entry name" value="Cytochrome_b_C_euk/bac"/>
</dbReference>
<dbReference type="InterPro" id="IPR048259">
    <property type="entry name" value="Cytochrome_b_N_euk/bac"/>
</dbReference>
<dbReference type="InterPro" id="IPR016174">
    <property type="entry name" value="Di-haem_cyt_TM"/>
</dbReference>
<dbReference type="PANTHER" id="PTHR19271">
    <property type="entry name" value="CYTOCHROME B"/>
    <property type="match status" value="1"/>
</dbReference>
<dbReference type="PANTHER" id="PTHR19271:SF16">
    <property type="entry name" value="CYTOCHROME B"/>
    <property type="match status" value="1"/>
</dbReference>
<dbReference type="Pfam" id="PF00032">
    <property type="entry name" value="Cytochrom_B_C"/>
    <property type="match status" value="1"/>
</dbReference>
<dbReference type="Pfam" id="PF00033">
    <property type="entry name" value="Cytochrome_B"/>
    <property type="match status" value="1"/>
</dbReference>
<dbReference type="PIRSF" id="PIRSF038885">
    <property type="entry name" value="COB"/>
    <property type="match status" value="1"/>
</dbReference>
<dbReference type="SUPFAM" id="SSF81648">
    <property type="entry name" value="a domain/subunit of cytochrome bc1 complex (Ubiquinol-cytochrome c reductase)"/>
    <property type="match status" value="1"/>
</dbReference>
<dbReference type="SUPFAM" id="SSF81342">
    <property type="entry name" value="Transmembrane di-heme cytochromes"/>
    <property type="match status" value="1"/>
</dbReference>
<dbReference type="PROSITE" id="PS51003">
    <property type="entry name" value="CYTB_CTER"/>
    <property type="match status" value="1"/>
</dbReference>
<dbReference type="PROSITE" id="PS51002">
    <property type="entry name" value="CYTB_NTER"/>
    <property type="match status" value="1"/>
</dbReference>
<proteinExistence type="inferred from homology"/>
<name>CYB_PLATE</name>
<feature type="chain" id="PRO_0000061416" description="Cytochrome b">
    <location>
        <begin position="1"/>
        <end position="381"/>
    </location>
</feature>
<feature type="transmembrane region" description="Helical" evidence="2">
    <location>
        <begin position="33"/>
        <end position="53"/>
    </location>
</feature>
<feature type="transmembrane region" description="Helical" evidence="2">
    <location>
        <begin position="77"/>
        <end position="98"/>
    </location>
</feature>
<feature type="transmembrane region" description="Helical" evidence="2">
    <location>
        <begin position="113"/>
        <end position="133"/>
    </location>
</feature>
<feature type="transmembrane region" description="Helical" evidence="2">
    <location>
        <begin position="178"/>
        <end position="198"/>
    </location>
</feature>
<feature type="transmembrane region" description="Helical" evidence="2">
    <location>
        <begin position="226"/>
        <end position="246"/>
    </location>
</feature>
<feature type="transmembrane region" description="Helical" evidence="2">
    <location>
        <begin position="288"/>
        <end position="308"/>
    </location>
</feature>
<feature type="transmembrane region" description="Helical" evidence="2">
    <location>
        <begin position="320"/>
        <end position="340"/>
    </location>
</feature>
<feature type="transmembrane region" description="Helical" evidence="2">
    <location>
        <begin position="347"/>
        <end position="367"/>
    </location>
</feature>
<feature type="binding site" description="axial binding residue" evidence="2">
    <location>
        <position position="83"/>
    </location>
    <ligand>
        <name>heme b</name>
        <dbReference type="ChEBI" id="CHEBI:60344"/>
        <label>b562</label>
    </ligand>
    <ligandPart>
        <name>Fe</name>
        <dbReference type="ChEBI" id="CHEBI:18248"/>
    </ligandPart>
</feature>
<feature type="binding site" description="axial binding residue" evidence="2">
    <location>
        <position position="97"/>
    </location>
    <ligand>
        <name>heme b</name>
        <dbReference type="ChEBI" id="CHEBI:60344"/>
        <label>b566</label>
    </ligand>
    <ligandPart>
        <name>Fe</name>
        <dbReference type="ChEBI" id="CHEBI:18248"/>
    </ligandPart>
</feature>
<feature type="binding site" description="axial binding residue" evidence="2">
    <location>
        <position position="182"/>
    </location>
    <ligand>
        <name>heme b</name>
        <dbReference type="ChEBI" id="CHEBI:60344"/>
        <label>b562</label>
    </ligand>
    <ligandPart>
        <name>Fe</name>
        <dbReference type="ChEBI" id="CHEBI:18248"/>
    </ligandPart>
</feature>
<feature type="binding site" description="axial binding residue" evidence="2">
    <location>
        <position position="196"/>
    </location>
    <ligand>
        <name>heme b</name>
        <dbReference type="ChEBI" id="CHEBI:60344"/>
        <label>b566</label>
    </ligand>
    <ligandPart>
        <name>Fe</name>
        <dbReference type="ChEBI" id="CHEBI:18248"/>
    </ligandPart>
</feature>
<feature type="binding site" evidence="2">
    <location>
        <position position="201"/>
    </location>
    <ligand>
        <name>a ubiquinone</name>
        <dbReference type="ChEBI" id="CHEBI:16389"/>
    </ligand>
</feature>
<reference key="1">
    <citation type="journal article" date="1997" name="Mol. Phylogenet. Evol.">
        <title>A multigene assessment of phylogenetic relationships within the dasyurid marsupial subfamily Sminthopsinae.</title>
        <authorList>
            <person name="Krajewski C."/>
            <person name="Blacket M."/>
            <person name="Buckley L."/>
            <person name="Westerman M."/>
        </authorList>
    </citation>
    <scope>NUCLEOTIDE SEQUENCE [GENOMIC DNA]</scope>
</reference>
<organism>
    <name type="scientific">Planigale tenuirostris</name>
    <name type="common">Narrow-nosed planigale</name>
    <dbReference type="NCBI Taxonomy" id="32557"/>
    <lineage>
        <taxon>Eukaryota</taxon>
        <taxon>Metazoa</taxon>
        <taxon>Chordata</taxon>
        <taxon>Craniata</taxon>
        <taxon>Vertebrata</taxon>
        <taxon>Euteleostomi</taxon>
        <taxon>Mammalia</taxon>
        <taxon>Metatheria</taxon>
        <taxon>Dasyuromorphia</taxon>
        <taxon>Dasyuridae</taxon>
        <taxon>Planigale</taxon>
    </lineage>
</organism>
<evidence type="ECO:0000250" key="1"/>
<evidence type="ECO:0000250" key="2">
    <source>
        <dbReference type="UniProtKB" id="P00157"/>
    </source>
</evidence>
<evidence type="ECO:0000255" key="3">
    <source>
        <dbReference type="PROSITE-ProRule" id="PRU00967"/>
    </source>
</evidence>
<evidence type="ECO:0000255" key="4">
    <source>
        <dbReference type="PROSITE-ProRule" id="PRU00968"/>
    </source>
</evidence>